<organism>
    <name type="scientific">Campylobacter jejuni subsp. doylei (strain ATCC BAA-1458 / RM4099 / 269.97)</name>
    <dbReference type="NCBI Taxonomy" id="360109"/>
    <lineage>
        <taxon>Bacteria</taxon>
        <taxon>Pseudomonadati</taxon>
        <taxon>Campylobacterota</taxon>
        <taxon>Epsilonproteobacteria</taxon>
        <taxon>Campylobacterales</taxon>
        <taxon>Campylobacteraceae</taxon>
        <taxon>Campylobacter</taxon>
    </lineage>
</organism>
<name>GPDA_CAMJD</name>
<accession>A7H2I1</accession>
<reference key="1">
    <citation type="submission" date="2007-07" db="EMBL/GenBank/DDBJ databases">
        <title>Complete genome sequence of Campylobacter jejuni subsp doylei 269.97 isolated from human blood.</title>
        <authorList>
            <person name="Fouts D.E."/>
            <person name="Mongodin E.F."/>
            <person name="Puiu D."/>
            <person name="Sebastian Y."/>
            <person name="Miller W.G."/>
            <person name="Mandrell R.E."/>
            <person name="Lastovica A.J."/>
            <person name="Nelson K.E."/>
        </authorList>
    </citation>
    <scope>NUCLEOTIDE SEQUENCE [LARGE SCALE GENOMIC DNA]</scope>
    <source>
        <strain>ATCC BAA-1458 / RM4099 / 269.97</strain>
    </source>
</reference>
<gene>
    <name evidence="1" type="primary">gpsA</name>
    <name type="ordered locus">JJD26997_0533</name>
</gene>
<feature type="chain" id="PRO_1000049493" description="Glycerol-3-phosphate dehydrogenase [NAD(P)+]">
    <location>
        <begin position="1"/>
        <end position="297"/>
    </location>
</feature>
<feature type="active site" description="Proton acceptor" evidence="1">
    <location>
        <position position="161"/>
    </location>
</feature>
<feature type="binding site" evidence="1">
    <location>
        <position position="11"/>
    </location>
    <ligand>
        <name>NADPH</name>
        <dbReference type="ChEBI" id="CHEBI:57783"/>
    </ligand>
</feature>
<feature type="binding site" evidence="1">
    <location>
        <position position="33"/>
    </location>
    <ligand>
        <name>NADPH</name>
        <dbReference type="ChEBI" id="CHEBI:57783"/>
    </ligand>
</feature>
<feature type="binding site" evidence="1">
    <location>
        <position position="79"/>
    </location>
    <ligand>
        <name>NADPH</name>
        <dbReference type="ChEBI" id="CHEBI:57783"/>
    </ligand>
</feature>
<feature type="binding site" evidence="1">
    <location>
        <position position="79"/>
    </location>
    <ligand>
        <name>sn-glycerol 3-phosphate</name>
        <dbReference type="ChEBI" id="CHEBI:57597"/>
    </ligand>
</feature>
<feature type="binding site" evidence="1">
    <location>
        <position position="107"/>
    </location>
    <ligand>
        <name>sn-glycerol 3-phosphate</name>
        <dbReference type="ChEBI" id="CHEBI:57597"/>
    </ligand>
</feature>
<feature type="binding site" evidence="1">
    <location>
        <position position="109"/>
    </location>
    <ligand>
        <name>sn-glycerol 3-phosphate</name>
        <dbReference type="ChEBI" id="CHEBI:57597"/>
    </ligand>
</feature>
<feature type="binding site" evidence="1">
    <location>
        <position position="111"/>
    </location>
    <ligand>
        <name>NADPH</name>
        <dbReference type="ChEBI" id="CHEBI:57783"/>
    </ligand>
</feature>
<feature type="binding site" evidence="1">
    <location>
        <position position="161"/>
    </location>
    <ligand>
        <name>sn-glycerol 3-phosphate</name>
        <dbReference type="ChEBI" id="CHEBI:57597"/>
    </ligand>
</feature>
<feature type="binding site" evidence="1">
    <location>
        <position position="214"/>
    </location>
    <ligand>
        <name>sn-glycerol 3-phosphate</name>
        <dbReference type="ChEBI" id="CHEBI:57597"/>
    </ligand>
</feature>
<feature type="binding site" evidence="1">
    <location>
        <position position="224"/>
    </location>
    <ligand>
        <name>sn-glycerol 3-phosphate</name>
        <dbReference type="ChEBI" id="CHEBI:57597"/>
    </ligand>
</feature>
<feature type="binding site" evidence="1">
    <location>
        <position position="225"/>
    </location>
    <ligand>
        <name>NADPH</name>
        <dbReference type="ChEBI" id="CHEBI:57783"/>
    </ligand>
</feature>
<feature type="binding site" evidence="1">
    <location>
        <position position="225"/>
    </location>
    <ligand>
        <name>sn-glycerol 3-phosphate</name>
        <dbReference type="ChEBI" id="CHEBI:57597"/>
    </ligand>
</feature>
<feature type="binding site" evidence="1">
    <location>
        <position position="226"/>
    </location>
    <ligand>
        <name>sn-glycerol 3-phosphate</name>
        <dbReference type="ChEBI" id="CHEBI:57597"/>
    </ligand>
</feature>
<feature type="binding site" evidence="1">
    <location>
        <position position="249"/>
    </location>
    <ligand>
        <name>NADPH</name>
        <dbReference type="ChEBI" id="CHEBI:57783"/>
    </ligand>
</feature>
<feature type="binding site" evidence="1">
    <location>
        <position position="251"/>
    </location>
    <ligand>
        <name>NADPH</name>
        <dbReference type="ChEBI" id="CHEBI:57783"/>
    </ligand>
</feature>
<comment type="function">
    <text evidence="1">Catalyzes the reduction of the glycolytic intermediate dihydroxyacetone phosphate (DHAP) to sn-glycerol 3-phosphate (G3P), the key precursor for phospholipid synthesis.</text>
</comment>
<comment type="catalytic activity">
    <reaction evidence="1">
        <text>sn-glycerol 3-phosphate + NAD(+) = dihydroxyacetone phosphate + NADH + H(+)</text>
        <dbReference type="Rhea" id="RHEA:11092"/>
        <dbReference type="ChEBI" id="CHEBI:15378"/>
        <dbReference type="ChEBI" id="CHEBI:57540"/>
        <dbReference type="ChEBI" id="CHEBI:57597"/>
        <dbReference type="ChEBI" id="CHEBI:57642"/>
        <dbReference type="ChEBI" id="CHEBI:57945"/>
        <dbReference type="EC" id="1.1.1.94"/>
    </reaction>
    <physiologicalReaction direction="right-to-left" evidence="1">
        <dbReference type="Rhea" id="RHEA:11094"/>
    </physiologicalReaction>
</comment>
<comment type="catalytic activity">
    <reaction evidence="1">
        <text>sn-glycerol 3-phosphate + NADP(+) = dihydroxyacetone phosphate + NADPH + H(+)</text>
        <dbReference type="Rhea" id="RHEA:11096"/>
        <dbReference type="ChEBI" id="CHEBI:15378"/>
        <dbReference type="ChEBI" id="CHEBI:57597"/>
        <dbReference type="ChEBI" id="CHEBI:57642"/>
        <dbReference type="ChEBI" id="CHEBI:57783"/>
        <dbReference type="ChEBI" id="CHEBI:58349"/>
        <dbReference type="EC" id="1.1.1.94"/>
    </reaction>
    <physiologicalReaction direction="right-to-left" evidence="1">
        <dbReference type="Rhea" id="RHEA:11098"/>
    </physiologicalReaction>
</comment>
<comment type="pathway">
    <text evidence="1">Membrane lipid metabolism; glycerophospholipid metabolism.</text>
</comment>
<comment type="subcellular location">
    <subcellularLocation>
        <location evidence="1">Cytoplasm</location>
    </subcellularLocation>
</comment>
<comment type="similarity">
    <text evidence="1">Belongs to the NAD-dependent glycerol-3-phosphate dehydrogenase family.</text>
</comment>
<evidence type="ECO:0000255" key="1">
    <source>
        <dbReference type="HAMAP-Rule" id="MF_00394"/>
    </source>
</evidence>
<keyword id="KW-0963">Cytoplasm</keyword>
<keyword id="KW-0444">Lipid biosynthesis</keyword>
<keyword id="KW-0443">Lipid metabolism</keyword>
<keyword id="KW-0520">NAD</keyword>
<keyword id="KW-0521">NADP</keyword>
<keyword id="KW-0547">Nucleotide-binding</keyword>
<keyword id="KW-0560">Oxidoreductase</keyword>
<keyword id="KW-0594">Phospholipid biosynthesis</keyword>
<keyword id="KW-1208">Phospholipid metabolism</keyword>
<sequence length="297" mass="32703">MRIAVIGAGKWGSALHLALKENHTCFISSLHQRDLEDFVSIKEALECEYLIFALSSQGMRVWLKENFINKGQKILIASKGIEDQSCQFLDEIFLDFVPKENFCVLSGPSFAAEVMQKLPTALMISGINQELCKKFASFFPDFIKTYIDDDVRGAEICGAYKNVLAIASGISDGLKLGNNARAALISRGLIEMHRFGKFFGAKEETFLGLGGAGDLFLTATSVLSRNYRVGLKLAQNQKLDSILAELNEVAEGVKTAYAIEKLAKMKGIYTPIVNEVVAIFKGKSVQEATQNLLKQND</sequence>
<protein>
    <recommendedName>
        <fullName evidence="1">Glycerol-3-phosphate dehydrogenase [NAD(P)+]</fullName>
        <ecNumber evidence="1">1.1.1.94</ecNumber>
    </recommendedName>
    <alternativeName>
        <fullName evidence="1">NAD(P)(+)-dependent glycerol-3-phosphate dehydrogenase</fullName>
    </alternativeName>
    <alternativeName>
        <fullName evidence="1">NAD(P)H-dependent dihydroxyacetone-phosphate reductase</fullName>
    </alternativeName>
</protein>
<dbReference type="EC" id="1.1.1.94" evidence="1"/>
<dbReference type="EMBL" id="CP000768">
    <property type="protein sequence ID" value="ABS44261.1"/>
    <property type="molecule type" value="Genomic_DNA"/>
</dbReference>
<dbReference type="SMR" id="A7H2I1"/>
<dbReference type="KEGG" id="cjd:JJD26997_0533"/>
<dbReference type="HOGENOM" id="CLU_033449_0_2_7"/>
<dbReference type="UniPathway" id="UPA00940"/>
<dbReference type="Proteomes" id="UP000002302">
    <property type="component" value="Chromosome"/>
</dbReference>
<dbReference type="GO" id="GO:0005829">
    <property type="term" value="C:cytosol"/>
    <property type="evidence" value="ECO:0007669"/>
    <property type="project" value="TreeGrafter"/>
</dbReference>
<dbReference type="GO" id="GO:0047952">
    <property type="term" value="F:glycerol-3-phosphate dehydrogenase [NAD(P)+] activity"/>
    <property type="evidence" value="ECO:0007669"/>
    <property type="project" value="UniProtKB-UniRule"/>
</dbReference>
<dbReference type="GO" id="GO:0051287">
    <property type="term" value="F:NAD binding"/>
    <property type="evidence" value="ECO:0007669"/>
    <property type="project" value="InterPro"/>
</dbReference>
<dbReference type="GO" id="GO:0005975">
    <property type="term" value="P:carbohydrate metabolic process"/>
    <property type="evidence" value="ECO:0007669"/>
    <property type="project" value="InterPro"/>
</dbReference>
<dbReference type="GO" id="GO:0046167">
    <property type="term" value="P:glycerol-3-phosphate biosynthetic process"/>
    <property type="evidence" value="ECO:0007669"/>
    <property type="project" value="UniProtKB-UniRule"/>
</dbReference>
<dbReference type="GO" id="GO:0046168">
    <property type="term" value="P:glycerol-3-phosphate catabolic process"/>
    <property type="evidence" value="ECO:0007669"/>
    <property type="project" value="InterPro"/>
</dbReference>
<dbReference type="GO" id="GO:0006650">
    <property type="term" value="P:glycerophospholipid metabolic process"/>
    <property type="evidence" value="ECO:0007669"/>
    <property type="project" value="UniProtKB-UniRule"/>
</dbReference>
<dbReference type="GO" id="GO:0008654">
    <property type="term" value="P:phospholipid biosynthetic process"/>
    <property type="evidence" value="ECO:0007669"/>
    <property type="project" value="UniProtKB-KW"/>
</dbReference>
<dbReference type="FunFam" id="1.10.1040.10:FF:000025">
    <property type="entry name" value="Glycerol-3-phosphate dehydrogenase [NAD(P)+]"/>
    <property type="match status" value="1"/>
</dbReference>
<dbReference type="Gene3D" id="1.10.1040.10">
    <property type="entry name" value="N-(1-d-carboxylethyl)-l-norvaline Dehydrogenase, domain 2"/>
    <property type="match status" value="1"/>
</dbReference>
<dbReference type="Gene3D" id="3.40.50.720">
    <property type="entry name" value="NAD(P)-binding Rossmann-like Domain"/>
    <property type="match status" value="1"/>
</dbReference>
<dbReference type="HAMAP" id="MF_00394">
    <property type="entry name" value="NAD_Glyc3P_dehydrog"/>
    <property type="match status" value="1"/>
</dbReference>
<dbReference type="InterPro" id="IPR008927">
    <property type="entry name" value="6-PGluconate_DH-like_C_sf"/>
</dbReference>
<dbReference type="InterPro" id="IPR013328">
    <property type="entry name" value="6PGD_dom2"/>
</dbReference>
<dbReference type="InterPro" id="IPR006168">
    <property type="entry name" value="G3P_DH_NAD-dep"/>
</dbReference>
<dbReference type="InterPro" id="IPR006109">
    <property type="entry name" value="G3P_DH_NAD-dep_C"/>
</dbReference>
<dbReference type="InterPro" id="IPR011128">
    <property type="entry name" value="G3P_DH_NAD-dep_N"/>
</dbReference>
<dbReference type="InterPro" id="IPR036291">
    <property type="entry name" value="NAD(P)-bd_dom_sf"/>
</dbReference>
<dbReference type="NCBIfam" id="NF000940">
    <property type="entry name" value="PRK00094.1-2"/>
    <property type="match status" value="1"/>
</dbReference>
<dbReference type="NCBIfam" id="NF000942">
    <property type="entry name" value="PRK00094.1-4"/>
    <property type="match status" value="1"/>
</dbReference>
<dbReference type="NCBIfam" id="NF000943">
    <property type="entry name" value="PRK00094.2-1"/>
    <property type="match status" value="1"/>
</dbReference>
<dbReference type="PANTHER" id="PTHR11728">
    <property type="entry name" value="GLYCEROL-3-PHOSPHATE DEHYDROGENASE"/>
    <property type="match status" value="1"/>
</dbReference>
<dbReference type="PANTHER" id="PTHR11728:SF1">
    <property type="entry name" value="GLYCEROL-3-PHOSPHATE DEHYDROGENASE [NAD(+)] 2, CHLOROPLASTIC"/>
    <property type="match status" value="1"/>
</dbReference>
<dbReference type="Pfam" id="PF07479">
    <property type="entry name" value="NAD_Gly3P_dh_C"/>
    <property type="match status" value="1"/>
</dbReference>
<dbReference type="Pfam" id="PF01210">
    <property type="entry name" value="NAD_Gly3P_dh_N"/>
    <property type="match status" value="1"/>
</dbReference>
<dbReference type="PIRSF" id="PIRSF000114">
    <property type="entry name" value="Glycerol-3-P_dh"/>
    <property type="match status" value="1"/>
</dbReference>
<dbReference type="SUPFAM" id="SSF48179">
    <property type="entry name" value="6-phosphogluconate dehydrogenase C-terminal domain-like"/>
    <property type="match status" value="1"/>
</dbReference>
<dbReference type="SUPFAM" id="SSF51735">
    <property type="entry name" value="NAD(P)-binding Rossmann-fold domains"/>
    <property type="match status" value="1"/>
</dbReference>
<dbReference type="PROSITE" id="PS00957">
    <property type="entry name" value="NAD_G3PDH"/>
    <property type="match status" value="1"/>
</dbReference>
<proteinExistence type="inferred from homology"/>